<comment type="function">
    <text evidence="1">May control the interaction of photosystem II (PSII) cores with the light-harvesting antenna, regulates electron flow through the 2 photosystem reaction centers. PSII is a light-driven water plastoquinone oxidoreductase, using light energy to abstract electrons from H(2)O, generating a proton gradient subsequently used for ATP formation.</text>
</comment>
<comment type="subunit">
    <text evidence="1">PSII is composed of 1 copy each of membrane proteins PsbA, PsbB, PsbC, PsbD, PsbE, PsbF, PsbH, PsbI, PsbJ, PsbK, PsbL, PsbM, PsbT, PsbY, PsbZ, Psb30/Ycf12, at least 3 peripheral proteins of the oxygen-evolving complex and a large number of cofactors. It forms dimeric complexes.</text>
</comment>
<comment type="subcellular location">
    <subcellularLocation>
        <location evidence="1">Plastid</location>
        <location evidence="1">Chloroplast thylakoid membrane</location>
        <topology evidence="1">Multi-pass membrane protein</topology>
    </subcellularLocation>
</comment>
<comment type="similarity">
    <text evidence="1">Belongs to the PsbZ family.</text>
</comment>
<sequence length="62" mass="6582">MTIAFQLAVFALIVTSSVLVISVPLVFASPDGWSNNKNVVFSGTSLWIGLVFLVAILNSLIS</sequence>
<reference key="1">
    <citation type="journal article" date="1989" name="Mol. Gen. Genet.">
        <title>The complete sequence of the rice (Oryza sativa) chloroplast genome: intermolecular recombination between distinct tRNA genes accounts for a major plastid DNA inversion during the evolution of the cereals.</title>
        <authorList>
            <person name="Hiratsuka J."/>
            <person name="Shimada H."/>
            <person name="Whittier R."/>
            <person name="Ishibashi T."/>
            <person name="Sakamoto M."/>
            <person name="Mori M."/>
            <person name="Kondo C."/>
            <person name="Honji Y."/>
            <person name="Sun C.-R."/>
            <person name="Meng B.-Y."/>
            <person name="Li Y.-Q."/>
            <person name="Kanno A."/>
            <person name="Nishizawa Y."/>
            <person name="Hirai A."/>
            <person name="Shinozaki K."/>
            <person name="Sugiura M."/>
        </authorList>
    </citation>
    <scope>NUCLEOTIDE SEQUENCE [LARGE SCALE GENOMIC DNA]</scope>
    <source>
        <strain>cv. Nipponbare</strain>
    </source>
</reference>
<reference key="2">
    <citation type="journal article" date="2004" name="Plant Physiol.">
        <title>A comparison of rice chloroplast genomes.</title>
        <authorList>
            <person name="Tang J."/>
            <person name="Xia H."/>
            <person name="Cao M."/>
            <person name="Zhang X."/>
            <person name="Zeng W."/>
            <person name="Hu S."/>
            <person name="Tong W."/>
            <person name="Wang J."/>
            <person name="Wang J."/>
            <person name="Yu J."/>
            <person name="Yang H."/>
            <person name="Zhu L."/>
        </authorList>
    </citation>
    <scope>NUCLEOTIDE SEQUENCE [LARGE SCALE GENOMIC DNA]</scope>
    <source>
        <strain>cv. Nipponbare</strain>
    </source>
</reference>
<evidence type="ECO:0000255" key="1">
    <source>
        <dbReference type="HAMAP-Rule" id="MF_00644"/>
    </source>
</evidence>
<gene>
    <name evidence="1" type="primary">psbZ</name>
    <name type="synonym">ycf9</name>
    <name type="ordered locus">LOC_Osp1g00190</name>
</gene>
<feature type="chain" id="PRO_0000217720" description="Photosystem II reaction center protein Z">
    <location>
        <begin position="1"/>
        <end position="62"/>
    </location>
</feature>
<feature type="transmembrane region" description="Helical" evidence="1">
    <location>
        <begin position="8"/>
        <end position="28"/>
    </location>
</feature>
<feature type="transmembrane region" description="Helical" evidence="1">
    <location>
        <begin position="41"/>
        <end position="61"/>
    </location>
</feature>
<protein>
    <recommendedName>
        <fullName evidence="1">Photosystem II reaction center protein Z</fullName>
        <shortName evidence="1">PSII-Z</shortName>
    </recommendedName>
</protein>
<geneLocation type="chloroplast"/>
<accession>P12194</accession>
<keyword id="KW-0150">Chloroplast</keyword>
<keyword id="KW-0472">Membrane</keyword>
<keyword id="KW-0602">Photosynthesis</keyword>
<keyword id="KW-0604">Photosystem II</keyword>
<keyword id="KW-0934">Plastid</keyword>
<keyword id="KW-0674">Reaction center</keyword>
<keyword id="KW-1185">Reference proteome</keyword>
<keyword id="KW-0793">Thylakoid</keyword>
<keyword id="KW-0812">Transmembrane</keyword>
<keyword id="KW-1133">Transmembrane helix</keyword>
<proteinExistence type="inferred from homology"/>
<name>PSBZ_ORYSJ</name>
<dbReference type="EMBL" id="X15901">
    <property type="protein sequence ID" value="CAA34015.1"/>
    <property type="molecule type" value="Genomic_DNA"/>
</dbReference>
<dbReference type="EMBL" id="AY522330">
    <property type="status" value="NOT_ANNOTATED_CDS"/>
    <property type="molecule type" value="Genomic_DNA"/>
</dbReference>
<dbReference type="PIR" id="JQ0208">
    <property type="entry name" value="JQ0208"/>
</dbReference>
<dbReference type="RefSeq" id="NP_039368.1">
    <property type="nucleotide sequence ID" value="NC_001320.1"/>
</dbReference>
<dbReference type="SMR" id="P12194"/>
<dbReference type="FunCoup" id="P12194">
    <property type="interactions" value="94"/>
</dbReference>
<dbReference type="STRING" id="39947.P12194"/>
<dbReference type="PaxDb" id="39947-P12194"/>
<dbReference type="GeneID" id="3131452"/>
<dbReference type="KEGG" id="dosa:CAA34015.1"/>
<dbReference type="KEGG" id="osa:3131452"/>
<dbReference type="eggNOG" id="ENOG502S7KE">
    <property type="taxonomic scope" value="Eukaryota"/>
</dbReference>
<dbReference type="HOGENOM" id="CLU_195286_0_0_1"/>
<dbReference type="InParanoid" id="P12194"/>
<dbReference type="OrthoDB" id="769790at2759"/>
<dbReference type="Proteomes" id="UP000059680">
    <property type="component" value="Chloroplast"/>
</dbReference>
<dbReference type="GO" id="GO:0009535">
    <property type="term" value="C:chloroplast thylakoid membrane"/>
    <property type="evidence" value="ECO:0007669"/>
    <property type="project" value="UniProtKB-SubCell"/>
</dbReference>
<dbReference type="GO" id="GO:0009539">
    <property type="term" value="C:photosystem II reaction center"/>
    <property type="evidence" value="ECO:0007669"/>
    <property type="project" value="InterPro"/>
</dbReference>
<dbReference type="GO" id="GO:0009536">
    <property type="term" value="C:plastid"/>
    <property type="evidence" value="ECO:0000250"/>
    <property type="project" value="Gramene"/>
</dbReference>
<dbReference type="GO" id="GO:0015979">
    <property type="term" value="P:photosynthesis"/>
    <property type="evidence" value="ECO:0007669"/>
    <property type="project" value="UniProtKB-UniRule"/>
</dbReference>
<dbReference type="GO" id="GO:0042549">
    <property type="term" value="P:photosystem II stabilization"/>
    <property type="evidence" value="ECO:0007669"/>
    <property type="project" value="InterPro"/>
</dbReference>
<dbReference type="FunFam" id="1.10.287.740:FF:000001">
    <property type="entry name" value="Photosystem II reaction center protein Z"/>
    <property type="match status" value="1"/>
</dbReference>
<dbReference type="Gene3D" id="1.10.287.740">
    <property type="entry name" value="Photosystem II PsbZ, reaction centre"/>
    <property type="match status" value="1"/>
</dbReference>
<dbReference type="HAMAP" id="MF_00644">
    <property type="entry name" value="PSII_PsbZ"/>
    <property type="match status" value="1"/>
</dbReference>
<dbReference type="InterPro" id="IPR002644">
    <property type="entry name" value="PSII_PsbZ"/>
</dbReference>
<dbReference type="InterPro" id="IPR036512">
    <property type="entry name" value="PSII_PsbZ_sf"/>
</dbReference>
<dbReference type="NCBIfam" id="TIGR03043">
    <property type="entry name" value="PS_II_psbZ"/>
    <property type="match status" value="1"/>
</dbReference>
<dbReference type="PANTHER" id="PTHR34971">
    <property type="entry name" value="PHOTOSYSTEM II REACTION CENTER PROTEIN Z"/>
    <property type="match status" value="1"/>
</dbReference>
<dbReference type="PANTHER" id="PTHR34971:SF2">
    <property type="entry name" value="PHOTOSYSTEM II REACTION CENTER PROTEIN Z"/>
    <property type="match status" value="1"/>
</dbReference>
<dbReference type="Pfam" id="PF01737">
    <property type="entry name" value="Ycf9"/>
    <property type="match status" value="1"/>
</dbReference>
<dbReference type="SUPFAM" id="SSF161055">
    <property type="entry name" value="PsbZ-like"/>
    <property type="match status" value="1"/>
</dbReference>
<organism>
    <name type="scientific">Oryza sativa subsp. japonica</name>
    <name type="common">Rice</name>
    <dbReference type="NCBI Taxonomy" id="39947"/>
    <lineage>
        <taxon>Eukaryota</taxon>
        <taxon>Viridiplantae</taxon>
        <taxon>Streptophyta</taxon>
        <taxon>Embryophyta</taxon>
        <taxon>Tracheophyta</taxon>
        <taxon>Spermatophyta</taxon>
        <taxon>Magnoliopsida</taxon>
        <taxon>Liliopsida</taxon>
        <taxon>Poales</taxon>
        <taxon>Poaceae</taxon>
        <taxon>BOP clade</taxon>
        <taxon>Oryzoideae</taxon>
        <taxon>Oryzeae</taxon>
        <taxon>Oryzinae</taxon>
        <taxon>Oryza</taxon>
        <taxon>Oryza sativa</taxon>
    </lineage>
</organism>